<organism>
    <name type="scientific">Ureaplasma parvum serovar 3 (strain ATCC 700970)</name>
    <dbReference type="NCBI Taxonomy" id="273119"/>
    <lineage>
        <taxon>Bacteria</taxon>
        <taxon>Bacillati</taxon>
        <taxon>Mycoplasmatota</taxon>
        <taxon>Mycoplasmoidales</taxon>
        <taxon>Mycoplasmoidaceae</taxon>
        <taxon>Ureaplasma</taxon>
    </lineage>
</organism>
<feature type="chain" id="PRO_0000267963" description="Large ribosomal subunit protein bL17">
    <location>
        <begin position="1"/>
        <end position="119"/>
    </location>
</feature>
<accession>Q9PQN3</accession>
<gene>
    <name evidence="1" type="primary">rplQ</name>
    <name type="ordered locus">UU258</name>
</gene>
<proteinExistence type="inferred from homology"/>
<protein>
    <recommendedName>
        <fullName evidence="1">Large ribosomal subunit protein bL17</fullName>
    </recommendedName>
    <alternativeName>
        <fullName evidence="2">50S ribosomal protein L17</fullName>
    </alternativeName>
</protein>
<comment type="subunit">
    <text evidence="1">Part of the 50S ribosomal subunit. Contacts protein L32.</text>
</comment>
<comment type="similarity">
    <text evidence="1">Belongs to the bacterial ribosomal protein bL17 family.</text>
</comment>
<keyword id="KW-1185">Reference proteome</keyword>
<keyword id="KW-0687">Ribonucleoprotein</keyword>
<keyword id="KW-0689">Ribosomal protein</keyword>
<dbReference type="EMBL" id="AF222894">
    <property type="protein sequence ID" value="AAF30667.1"/>
    <property type="molecule type" value="Genomic_DNA"/>
</dbReference>
<dbReference type="RefSeq" id="WP_004026179.1">
    <property type="nucleotide sequence ID" value="NC_002162.1"/>
</dbReference>
<dbReference type="SMR" id="Q9PQN3"/>
<dbReference type="STRING" id="273119.UU258"/>
<dbReference type="EnsemblBacteria" id="AAF30667">
    <property type="protein sequence ID" value="AAF30667"/>
    <property type="gene ID" value="UU258"/>
</dbReference>
<dbReference type="GeneID" id="93848733"/>
<dbReference type="KEGG" id="uur:UU258"/>
<dbReference type="eggNOG" id="COG0203">
    <property type="taxonomic scope" value="Bacteria"/>
</dbReference>
<dbReference type="HOGENOM" id="CLU_074407_2_2_14"/>
<dbReference type="OrthoDB" id="9809073at2"/>
<dbReference type="Proteomes" id="UP000000423">
    <property type="component" value="Chromosome"/>
</dbReference>
<dbReference type="GO" id="GO:0022625">
    <property type="term" value="C:cytosolic large ribosomal subunit"/>
    <property type="evidence" value="ECO:0007669"/>
    <property type="project" value="TreeGrafter"/>
</dbReference>
<dbReference type="GO" id="GO:0003735">
    <property type="term" value="F:structural constituent of ribosome"/>
    <property type="evidence" value="ECO:0007669"/>
    <property type="project" value="InterPro"/>
</dbReference>
<dbReference type="GO" id="GO:0006412">
    <property type="term" value="P:translation"/>
    <property type="evidence" value="ECO:0007669"/>
    <property type="project" value="UniProtKB-UniRule"/>
</dbReference>
<dbReference type="Gene3D" id="3.90.1030.10">
    <property type="entry name" value="Ribosomal protein L17"/>
    <property type="match status" value="1"/>
</dbReference>
<dbReference type="HAMAP" id="MF_01368">
    <property type="entry name" value="Ribosomal_bL17"/>
    <property type="match status" value="1"/>
</dbReference>
<dbReference type="InterPro" id="IPR000456">
    <property type="entry name" value="Ribosomal_bL17"/>
</dbReference>
<dbReference type="InterPro" id="IPR047859">
    <property type="entry name" value="Ribosomal_bL17_CS"/>
</dbReference>
<dbReference type="InterPro" id="IPR036373">
    <property type="entry name" value="Ribosomal_bL17_sf"/>
</dbReference>
<dbReference type="NCBIfam" id="TIGR00059">
    <property type="entry name" value="L17"/>
    <property type="match status" value="1"/>
</dbReference>
<dbReference type="PANTHER" id="PTHR14413:SF16">
    <property type="entry name" value="LARGE RIBOSOMAL SUBUNIT PROTEIN BL17M"/>
    <property type="match status" value="1"/>
</dbReference>
<dbReference type="PANTHER" id="PTHR14413">
    <property type="entry name" value="RIBOSOMAL PROTEIN L17"/>
    <property type="match status" value="1"/>
</dbReference>
<dbReference type="Pfam" id="PF01196">
    <property type="entry name" value="Ribosomal_L17"/>
    <property type="match status" value="1"/>
</dbReference>
<dbReference type="SUPFAM" id="SSF64263">
    <property type="entry name" value="Prokaryotic ribosomal protein L17"/>
    <property type="match status" value="1"/>
</dbReference>
<dbReference type="PROSITE" id="PS01167">
    <property type="entry name" value="RIBOSOMAL_L17"/>
    <property type="match status" value="1"/>
</dbReference>
<name>RL17_UREPA</name>
<evidence type="ECO:0000255" key="1">
    <source>
        <dbReference type="HAMAP-Rule" id="MF_01368"/>
    </source>
</evidence>
<evidence type="ECO:0000305" key="2"/>
<reference key="1">
    <citation type="journal article" date="2000" name="Nature">
        <title>The complete sequence of the mucosal pathogen Ureaplasma urealyticum.</title>
        <authorList>
            <person name="Glass J.I."/>
            <person name="Lefkowitz E.J."/>
            <person name="Glass J.S."/>
            <person name="Heiner C.R."/>
            <person name="Chen E.Y."/>
            <person name="Cassell G.H."/>
        </authorList>
    </citation>
    <scope>NUCLEOTIDE SEQUENCE [LARGE SCALE GENOMIC DNA]</scope>
    <source>
        <strain>ATCC 700970</strain>
    </source>
</reference>
<sequence length="119" mass="13192">MSYINKPGKTRAWRKMVSRQQVSDVISHGSIVTTKTKAKESQRHVDHLITLAKKNTLASRRAAAAILLGTNQHSADDLLRKLFNELGPKYANRAGGYTRVIKLGNRPGDNTEEAVLQLV</sequence>